<gene>
    <name evidence="1" type="primary">thrS</name>
    <name type="ordered locus">SUB0540</name>
</gene>
<feature type="chain" id="PRO_1000199574" description="Threonine--tRNA ligase">
    <location>
        <begin position="1"/>
        <end position="648"/>
    </location>
</feature>
<feature type="domain" description="TGS" evidence="2">
    <location>
        <begin position="1"/>
        <end position="61"/>
    </location>
</feature>
<feature type="region of interest" description="Catalytic" evidence="1">
    <location>
        <begin position="242"/>
        <end position="540"/>
    </location>
</feature>
<feature type="binding site" evidence="1">
    <location>
        <position position="336"/>
    </location>
    <ligand>
        <name>Zn(2+)</name>
        <dbReference type="ChEBI" id="CHEBI:29105"/>
    </ligand>
</feature>
<feature type="binding site" evidence="1">
    <location>
        <position position="387"/>
    </location>
    <ligand>
        <name>Zn(2+)</name>
        <dbReference type="ChEBI" id="CHEBI:29105"/>
    </ligand>
</feature>
<feature type="binding site" evidence="1">
    <location>
        <position position="517"/>
    </location>
    <ligand>
        <name>Zn(2+)</name>
        <dbReference type="ChEBI" id="CHEBI:29105"/>
    </ligand>
</feature>
<keyword id="KW-0030">Aminoacyl-tRNA synthetase</keyword>
<keyword id="KW-0067">ATP-binding</keyword>
<keyword id="KW-0963">Cytoplasm</keyword>
<keyword id="KW-0436">Ligase</keyword>
<keyword id="KW-0479">Metal-binding</keyword>
<keyword id="KW-0547">Nucleotide-binding</keyword>
<keyword id="KW-0648">Protein biosynthesis</keyword>
<keyword id="KW-1185">Reference proteome</keyword>
<keyword id="KW-0694">RNA-binding</keyword>
<keyword id="KW-0820">tRNA-binding</keyword>
<keyword id="KW-0862">Zinc</keyword>
<name>SYT_STRU0</name>
<evidence type="ECO:0000255" key="1">
    <source>
        <dbReference type="HAMAP-Rule" id="MF_00184"/>
    </source>
</evidence>
<evidence type="ECO:0000255" key="2">
    <source>
        <dbReference type="PROSITE-ProRule" id="PRU01228"/>
    </source>
</evidence>
<reference key="1">
    <citation type="journal article" date="2009" name="BMC Genomics">
        <title>Evidence for niche adaptation in the genome of the bovine pathogen Streptococcus uberis.</title>
        <authorList>
            <person name="Ward P.N."/>
            <person name="Holden M.T.G."/>
            <person name="Leigh J.A."/>
            <person name="Lennard N."/>
            <person name="Bignell A."/>
            <person name="Barron A."/>
            <person name="Clark L."/>
            <person name="Quail M.A."/>
            <person name="Woodward J."/>
            <person name="Barrell B.G."/>
            <person name="Egan S.A."/>
            <person name="Field T.R."/>
            <person name="Maskell D."/>
            <person name="Kehoe M."/>
            <person name="Dowson C.G."/>
            <person name="Chanter N."/>
            <person name="Whatmore A.M."/>
            <person name="Bentley S.D."/>
            <person name="Parkhill J."/>
        </authorList>
    </citation>
    <scope>NUCLEOTIDE SEQUENCE [LARGE SCALE GENOMIC DNA]</scope>
    <source>
        <strain>ATCC BAA-854 / 0140J</strain>
    </source>
</reference>
<proteinExistence type="inferred from homology"/>
<comment type="function">
    <text evidence="1">Catalyzes the attachment of threonine to tRNA(Thr) in a two-step reaction: L-threonine is first activated by ATP to form Thr-AMP and then transferred to the acceptor end of tRNA(Thr). Also edits incorrectly charged L-seryl-tRNA(Thr).</text>
</comment>
<comment type="catalytic activity">
    <reaction evidence="1">
        <text>tRNA(Thr) + L-threonine + ATP = L-threonyl-tRNA(Thr) + AMP + diphosphate + H(+)</text>
        <dbReference type="Rhea" id="RHEA:24624"/>
        <dbReference type="Rhea" id="RHEA-COMP:9670"/>
        <dbReference type="Rhea" id="RHEA-COMP:9704"/>
        <dbReference type="ChEBI" id="CHEBI:15378"/>
        <dbReference type="ChEBI" id="CHEBI:30616"/>
        <dbReference type="ChEBI" id="CHEBI:33019"/>
        <dbReference type="ChEBI" id="CHEBI:57926"/>
        <dbReference type="ChEBI" id="CHEBI:78442"/>
        <dbReference type="ChEBI" id="CHEBI:78534"/>
        <dbReference type="ChEBI" id="CHEBI:456215"/>
        <dbReference type="EC" id="6.1.1.3"/>
    </reaction>
</comment>
<comment type="cofactor">
    <cofactor evidence="1">
        <name>Zn(2+)</name>
        <dbReference type="ChEBI" id="CHEBI:29105"/>
    </cofactor>
    <text evidence="1">Binds 1 zinc ion per subunit.</text>
</comment>
<comment type="subunit">
    <text evidence="1">Homodimer.</text>
</comment>
<comment type="subcellular location">
    <subcellularLocation>
        <location evidence="1">Cytoplasm</location>
    </subcellularLocation>
</comment>
<comment type="similarity">
    <text evidence="1">Belongs to the class-II aminoacyl-tRNA synthetase family.</text>
</comment>
<organism>
    <name type="scientific">Streptococcus uberis (strain ATCC BAA-854 / 0140J)</name>
    <dbReference type="NCBI Taxonomy" id="218495"/>
    <lineage>
        <taxon>Bacteria</taxon>
        <taxon>Bacillati</taxon>
        <taxon>Bacillota</taxon>
        <taxon>Bacilli</taxon>
        <taxon>Lactobacillales</taxon>
        <taxon>Streptococcaceae</taxon>
        <taxon>Streptococcus</taxon>
    </lineage>
</organism>
<accession>B9DU13</accession>
<sequence>MINITFPDGAVREFESGITTFDIAQSISNSLAKKALAGKFNGQLIDTNRPIDTDGSIEIVTPDHEDAFGVLRHSAAHLFAQAAKRLFPDIHLGVGPAIAEGFYYDTDNSSGQISNEDLPRIEAEMQKIVKENYPCIREEVTKEEALEIFKDDPYKIELINEHSDDAAGLTIYRQGEFVDLCRGPHVPSTGRIQVFHLLNVAGAYWRGNSDNAMMQRVYGTAWFDKKDLKAYLTRLEEAKERDHRKLGKELDLFMISQEVGQGLPFWLPDGATIRRTLERYITDKELASGYQHVYTPPLASVELYKTSGHWEHYQEDMFPTMDMGDGEEFVLRPMNCPHHIQVYKNHVHSYRELPIRIAELGMMHRYEKSGALSGLQRVREMTLNDGHLFVTPEQIQEEFQRALQLIIDVYEDFNLTDYRFRLSYRDPKDTEKYYDNDEMWENAQSMLKAALDEMGVEYFEAEGEAAFYGPKLDIQVKTALGNEETLSTIQLDFLLPERFDLKYIGADGEEHRPVMIHRGVISTMERFTAILIETYKGAFPTWLAPHQVTVIPISNEAHIDYAWEVAKALRDRGIRADVDDRNEKMQYKIRASQTSKIPYQLIVGDKEMEDKSVNVRRYGSKATHTESLSEFMDTILADIARKSRPVED</sequence>
<protein>
    <recommendedName>
        <fullName evidence="1">Threonine--tRNA ligase</fullName>
        <ecNumber evidence="1">6.1.1.3</ecNumber>
    </recommendedName>
    <alternativeName>
        <fullName evidence="1">Threonyl-tRNA synthetase</fullName>
        <shortName evidence="1">ThrRS</shortName>
    </alternativeName>
</protein>
<dbReference type="EC" id="6.1.1.3" evidence="1"/>
<dbReference type="EMBL" id="AM946015">
    <property type="protein sequence ID" value="CAR41303.1"/>
    <property type="molecule type" value="Genomic_DNA"/>
</dbReference>
<dbReference type="RefSeq" id="WP_012658066.1">
    <property type="nucleotide sequence ID" value="NC_012004.1"/>
</dbReference>
<dbReference type="SMR" id="B9DU13"/>
<dbReference type="STRING" id="218495.SUB0540"/>
<dbReference type="GeneID" id="93825830"/>
<dbReference type="KEGG" id="sub:SUB0540"/>
<dbReference type="eggNOG" id="COG0441">
    <property type="taxonomic scope" value="Bacteria"/>
</dbReference>
<dbReference type="HOGENOM" id="CLU_008554_0_1_9"/>
<dbReference type="OrthoDB" id="9802304at2"/>
<dbReference type="Proteomes" id="UP000000449">
    <property type="component" value="Chromosome"/>
</dbReference>
<dbReference type="GO" id="GO:0005737">
    <property type="term" value="C:cytoplasm"/>
    <property type="evidence" value="ECO:0007669"/>
    <property type="project" value="UniProtKB-SubCell"/>
</dbReference>
<dbReference type="GO" id="GO:0005524">
    <property type="term" value="F:ATP binding"/>
    <property type="evidence" value="ECO:0007669"/>
    <property type="project" value="UniProtKB-UniRule"/>
</dbReference>
<dbReference type="GO" id="GO:0140096">
    <property type="term" value="F:catalytic activity, acting on a protein"/>
    <property type="evidence" value="ECO:0007669"/>
    <property type="project" value="UniProtKB-ARBA"/>
</dbReference>
<dbReference type="GO" id="GO:0046872">
    <property type="term" value="F:metal ion binding"/>
    <property type="evidence" value="ECO:0007669"/>
    <property type="project" value="UniProtKB-KW"/>
</dbReference>
<dbReference type="GO" id="GO:0004829">
    <property type="term" value="F:threonine-tRNA ligase activity"/>
    <property type="evidence" value="ECO:0007669"/>
    <property type="project" value="UniProtKB-UniRule"/>
</dbReference>
<dbReference type="GO" id="GO:0016740">
    <property type="term" value="F:transferase activity"/>
    <property type="evidence" value="ECO:0007669"/>
    <property type="project" value="UniProtKB-ARBA"/>
</dbReference>
<dbReference type="GO" id="GO:0000049">
    <property type="term" value="F:tRNA binding"/>
    <property type="evidence" value="ECO:0007669"/>
    <property type="project" value="UniProtKB-KW"/>
</dbReference>
<dbReference type="GO" id="GO:0006435">
    <property type="term" value="P:threonyl-tRNA aminoacylation"/>
    <property type="evidence" value="ECO:0007669"/>
    <property type="project" value="UniProtKB-UniRule"/>
</dbReference>
<dbReference type="CDD" id="cd01667">
    <property type="entry name" value="TGS_ThrRS"/>
    <property type="match status" value="1"/>
</dbReference>
<dbReference type="CDD" id="cd00860">
    <property type="entry name" value="ThrRS_anticodon"/>
    <property type="match status" value="1"/>
</dbReference>
<dbReference type="CDD" id="cd00771">
    <property type="entry name" value="ThrRS_core"/>
    <property type="match status" value="1"/>
</dbReference>
<dbReference type="FunFam" id="3.10.20.30:FF:000005">
    <property type="entry name" value="Threonine--tRNA ligase"/>
    <property type="match status" value="1"/>
</dbReference>
<dbReference type="FunFam" id="3.30.54.20:FF:000002">
    <property type="entry name" value="Threonine--tRNA ligase"/>
    <property type="match status" value="1"/>
</dbReference>
<dbReference type="FunFam" id="3.30.930.10:FF:000002">
    <property type="entry name" value="Threonine--tRNA ligase"/>
    <property type="match status" value="1"/>
</dbReference>
<dbReference type="FunFam" id="3.40.50.800:FF:000001">
    <property type="entry name" value="Threonine--tRNA ligase"/>
    <property type="match status" value="1"/>
</dbReference>
<dbReference type="FunFam" id="3.30.980.10:FF:000005">
    <property type="entry name" value="Threonyl-tRNA synthetase, mitochondrial"/>
    <property type="match status" value="1"/>
</dbReference>
<dbReference type="Gene3D" id="3.10.20.30">
    <property type="match status" value="1"/>
</dbReference>
<dbReference type="Gene3D" id="3.30.54.20">
    <property type="match status" value="1"/>
</dbReference>
<dbReference type="Gene3D" id="3.40.50.800">
    <property type="entry name" value="Anticodon-binding domain"/>
    <property type="match status" value="1"/>
</dbReference>
<dbReference type="Gene3D" id="3.30.930.10">
    <property type="entry name" value="Bira Bifunctional Protein, Domain 2"/>
    <property type="match status" value="1"/>
</dbReference>
<dbReference type="Gene3D" id="3.30.980.10">
    <property type="entry name" value="Threonyl-trna Synthetase, Chain A, domain 2"/>
    <property type="match status" value="1"/>
</dbReference>
<dbReference type="HAMAP" id="MF_00184">
    <property type="entry name" value="Thr_tRNA_synth"/>
    <property type="match status" value="1"/>
</dbReference>
<dbReference type="InterPro" id="IPR002314">
    <property type="entry name" value="aa-tRNA-synt_IIb"/>
</dbReference>
<dbReference type="InterPro" id="IPR006195">
    <property type="entry name" value="aa-tRNA-synth_II"/>
</dbReference>
<dbReference type="InterPro" id="IPR045864">
    <property type="entry name" value="aa-tRNA-synth_II/BPL/LPL"/>
</dbReference>
<dbReference type="InterPro" id="IPR004154">
    <property type="entry name" value="Anticodon-bd"/>
</dbReference>
<dbReference type="InterPro" id="IPR036621">
    <property type="entry name" value="Anticodon-bd_dom_sf"/>
</dbReference>
<dbReference type="InterPro" id="IPR012675">
    <property type="entry name" value="Beta-grasp_dom_sf"/>
</dbReference>
<dbReference type="InterPro" id="IPR004095">
    <property type="entry name" value="TGS"/>
</dbReference>
<dbReference type="InterPro" id="IPR012676">
    <property type="entry name" value="TGS-like"/>
</dbReference>
<dbReference type="InterPro" id="IPR002320">
    <property type="entry name" value="Thr-tRNA-ligase_IIa"/>
</dbReference>
<dbReference type="InterPro" id="IPR018163">
    <property type="entry name" value="Thr/Ala-tRNA-synth_IIc_edit"/>
</dbReference>
<dbReference type="InterPro" id="IPR047246">
    <property type="entry name" value="ThrRS_anticodon"/>
</dbReference>
<dbReference type="InterPro" id="IPR033728">
    <property type="entry name" value="ThrRS_core"/>
</dbReference>
<dbReference type="InterPro" id="IPR012947">
    <property type="entry name" value="tRNA_SAD"/>
</dbReference>
<dbReference type="NCBIfam" id="TIGR00418">
    <property type="entry name" value="thrS"/>
    <property type="match status" value="1"/>
</dbReference>
<dbReference type="PANTHER" id="PTHR11451:SF56">
    <property type="entry name" value="THREONINE--TRNA LIGASE 1"/>
    <property type="match status" value="1"/>
</dbReference>
<dbReference type="PANTHER" id="PTHR11451">
    <property type="entry name" value="THREONINE-TRNA LIGASE"/>
    <property type="match status" value="1"/>
</dbReference>
<dbReference type="Pfam" id="PF03129">
    <property type="entry name" value="HGTP_anticodon"/>
    <property type="match status" value="1"/>
</dbReference>
<dbReference type="Pfam" id="PF02824">
    <property type="entry name" value="TGS"/>
    <property type="match status" value="1"/>
</dbReference>
<dbReference type="Pfam" id="PF00587">
    <property type="entry name" value="tRNA-synt_2b"/>
    <property type="match status" value="1"/>
</dbReference>
<dbReference type="Pfam" id="PF07973">
    <property type="entry name" value="tRNA_SAD"/>
    <property type="match status" value="1"/>
</dbReference>
<dbReference type="PRINTS" id="PR01047">
    <property type="entry name" value="TRNASYNTHTHR"/>
</dbReference>
<dbReference type="SMART" id="SM00863">
    <property type="entry name" value="tRNA_SAD"/>
    <property type="match status" value="1"/>
</dbReference>
<dbReference type="SUPFAM" id="SSF52954">
    <property type="entry name" value="Class II aaRS ABD-related"/>
    <property type="match status" value="1"/>
</dbReference>
<dbReference type="SUPFAM" id="SSF55681">
    <property type="entry name" value="Class II aaRS and biotin synthetases"/>
    <property type="match status" value="1"/>
</dbReference>
<dbReference type="SUPFAM" id="SSF81271">
    <property type="entry name" value="TGS-like"/>
    <property type="match status" value="1"/>
</dbReference>
<dbReference type="SUPFAM" id="SSF55186">
    <property type="entry name" value="ThrRS/AlaRS common domain"/>
    <property type="match status" value="1"/>
</dbReference>
<dbReference type="PROSITE" id="PS50862">
    <property type="entry name" value="AA_TRNA_LIGASE_II"/>
    <property type="match status" value="1"/>
</dbReference>
<dbReference type="PROSITE" id="PS51880">
    <property type="entry name" value="TGS"/>
    <property type="match status" value="1"/>
</dbReference>